<organism>
    <name type="scientific">Chlorobaculum parvum (strain DSM 263 / NCIMB 8327)</name>
    <name type="common">Chlorobium vibrioforme subsp. thiosulfatophilum</name>
    <dbReference type="NCBI Taxonomy" id="517417"/>
    <lineage>
        <taxon>Bacteria</taxon>
        <taxon>Pseudomonadati</taxon>
        <taxon>Chlorobiota</taxon>
        <taxon>Chlorobiia</taxon>
        <taxon>Chlorobiales</taxon>
        <taxon>Chlorobiaceae</taxon>
        <taxon>Chlorobaculum</taxon>
    </lineage>
</organism>
<gene>
    <name evidence="1" type="primary">prfA</name>
    <name type="ordered locus">Cpar_0069</name>
</gene>
<sequence length="357" mass="40468">MFDKLQSIKDKYLTIEQQLSDPEVAADQNRFRKLNKEYSGLREIVRAYDNWRSAKQQLDETLAMQKSEEDPEMRALAAAEAEELQERLPELEQNLKILLLPKDEADTRNAIIEIRAGTGGDEAGLFAADLMRMYQRYAERQGWSCQTLDVSEGSVPGSLKEVSLEVSGHDVYGILKFESGVHRVQRVPETETQGRIHTSAASVAVLPEAEEVDVEIRKDDLQMDTFRSGGKGGQNVNKVETAVRITHVPSGIVVACQEERSQLQNRERAMKMLRSKLYDIKITEQLQSRADLRRSMVATGDRSAKIRTYNFPQSRVTDHRIGFTTHALPQVMQGELEPIIDALRMHDQAERLKAETN</sequence>
<feature type="chain" id="PRO_1000093437" description="Peptide chain release factor 1">
    <location>
        <begin position="1"/>
        <end position="357"/>
    </location>
</feature>
<feature type="modified residue" description="N5-methylglutamine" evidence="1">
    <location>
        <position position="234"/>
    </location>
</feature>
<proteinExistence type="inferred from homology"/>
<name>RF1_CHLP8</name>
<dbReference type="EMBL" id="CP001099">
    <property type="protein sequence ID" value="ACF10497.1"/>
    <property type="molecule type" value="Genomic_DNA"/>
</dbReference>
<dbReference type="RefSeq" id="WP_012501332.1">
    <property type="nucleotide sequence ID" value="NC_011027.1"/>
</dbReference>
<dbReference type="SMR" id="B3QRH7"/>
<dbReference type="STRING" id="517417.Cpar_0069"/>
<dbReference type="KEGG" id="cpc:Cpar_0069"/>
<dbReference type="eggNOG" id="COG0216">
    <property type="taxonomic scope" value="Bacteria"/>
</dbReference>
<dbReference type="HOGENOM" id="CLU_036856_0_1_10"/>
<dbReference type="OrthoDB" id="9806673at2"/>
<dbReference type="Proteomes" id="UP000008811">
    <property type="component" value="Chromosome"/>
</dbReference>
<dbReference type="GO" id="GO:0005737">
    <property type="term" value="C:cytoplasm"/>
    <property type="evidence" value="ECO:0007669"/>
    <property type="project" value="UniProtKB-SubCell"/>
</dbReference>
<dbReference type="GO" id="GO:0016149">
    <property type="term" value="F:translation release factor activity, codon specific"/>
    <property type="evidence" value="ECO:0007669"/>
    <property type="project" value="UniProtKB-UniRule"/>
</dbReference>
<dbReference type="FunFam" id="3.30.160.20:FF:000004">
    <property type="entry name" value="Peptide chain release factor 1"/>
    <property type="match status" value="1"/>
</dbReference>
<dbReference type="FunFam" id="3.30.70.1660:FF:000002">
    <property type="entry name" value="Peptide chain release factor 1"/>
    <property type="match status" value="1"/>
</dbReference>
<dbReference type="Gene3D" id="3.30.160.20">
    <property type="match status" value="1"/>
</dbReference>
<dbReference type="Gene3D" id="3.30.70.1660">
    <property type="match status" value="2"/>
</dbReference>
<dbReference type="Gene3D" id="6.10.140.1950">
    <property type="match status" value="1"/>
</dbReference>
<dbReference type="HAMAP" id="MF_00093">
    <property type="entry name" value="Rel_fac_1"/>
    <property type="match status" value="1"/>
</dbReference>
<dbReference type="InterPro" id="IPR005139">
    <property type="entry name" value="PCRF"/>
</dbReference>
<dbReference type="InterPro" id="IPR000352">
    <property type="entry name" value="Pep_chain_release_fac_I"/>
</dbReference>
<dbReference type="InterPro" id="IPR045853">
    <property type="entry name" value="Pep_chain_release_fac_I_sf"/>
</dbReference>
<dbReference type="InterPro" id="IPR050057">
    <property type="entry name" value="Prokaryotic/Mito_RF"/>
</dbReference>
<dbReference type="InterPro" id="IPR004373">
    <property type="entry name" value="RF-1"/>
</dbReference>
<dbReference type="NCBIfam" id="TIGR00019">
    <property type="entry name" value="prfA"/>
    <property type="match status" value="1"/>
</dbReference>
<dbReference type="NCBIfam" id="NF001859">
    <property type="entry name" value="PRK00591.1"/>
    <property type="match status" value="1"/>
</dbReference>
<dbReference type="PANTHER" id="PTHR43804">
    <property type="entry name" value="LD18447P"/>
    <property type="match status" value="1"/>
</dbReference>
<dbReference type="PANTHER" id="PTHR43804:SF7">
    <property type="entry name" value="LD18447P"/>
    <property type="match status" value="1"/>
</dbReference>
<dbReference type="Pfam" id="PF03462">
    <property type="entry name" value="PCRF"/>
    <property type="match status" value="1"/>
</dbReference>
<dbReference type="Pfam" id="PF00472">
    <property type="entry name" value="RF-1"/>
    <property type="match status" value="1"/>
</dbReference>
<dbReference type="SMART" id="SM00937">
    <property type="entry name" value="PCRF"/>
    <property type="match status" value="1"/>
</dbReference>
<dbReference type="SUPFAM" id="SSF75620">
    <property type="entry name" value="Release factor"/>
    <property type="match status" value="1"/>
</dbReference>
<dbReference type="PROSITE" id="PS00745">
    <property type="entry name" value="RF_PROK_I"/>
    <property type="match status" value="1"/>
</dbReference>
<accession>B3QRH7</accession>
<evidence type="ECO:0000255" key="1">
    <source>
        <dbReference type="HAMAP-Rule" id="MF_00093"/>
    </source>
</evidence>
<reference key="1">
    <citation type="submission" date="2008-06" db="EMBL/GenBank/DDBJ databases">
        <title>Complete sequence of Chlorobaculum parvum NCIB 8327.</title>
        <authorList>
            <consortium name="US DOE Joint Genome Institute"/>
            <person name="Lucas S."/>
            <person name="Copeland A."/>
            <person name="Lapidus A."/>
            <person name="Glavina del Rio T."/>
            <person name="Dalin E."/>
            <person name="Tice H."/>
            <person name="Bruce D."/>
            <person name="Goodwin L."/>
            <person name="Pitluck S."/>
            <person name="Schmutz J."/>
            <person name="Larimer F."/>
            <person name="Land M."/>
            <person name="Hauser L."/>
            <person name="Kyrpides N."/>
            <person name="Mikhailova N."/>
            <person name="Zhao F."/>
            <person name="Li T."/>
            <person name="Liu Z."/>
            <person name="Overmann J."/>
            <person name="Bryant D.A."/>
            <person name="Richardson P."/>
        </authorList>
    </citation>
    <scope>NUCLEOTIDE SEQUENCE [LARGE SCALE GENOMIC DNA]</scope>
    <source>
        <strain>DSM 263 / NCIMB 8327</strain>
    </source>
</reference>
<keyword id="KW-0963">Cytoplasm</keyword>
<keyword id="KW-0488">Methylation</keyword>
<keyword id="KW-0648">Protein biosynthesis</keyword>
<comment type="function">
    <text evidence="1">Peptide chain release factor 1 directs the termination of translation in response to the peptide chain termination codons UAG and UAA.</text>
</comment>
<comment type="subcellular location">
    <subcellularLocation>
        <location evidence="1">Cytoplasm</location>
    </subcellularLocation>
</comment>
<comment type="PTM">
    <text evidence="1">Methylated by PrmC. Methylation increases the termination efficiency of RF1.</text>
</comment>
<comment type="similarity">
    <text evidence="1">Belongs to the prokaryotic/mitochondrial release factor family.</text>
</comment>
<protein>
    <recommendedName>
        <fullName evidence="1">Peptide chain release factor 1</fullName>
        <shortName evidence="1">RF-1</shortName>
    </recommendedName>
</protein>